<accession>P0DPD8</accession>
<accession>A5PLK8</accession>
<accession>O60344</accession>
<accession>Q6NTG7</accession>
<accession>Q6UW36</accession>
<accession>Q8NFD7</accession>
<accession>Q96NX3</accession>
<accession>Q96NX4</accession>
<accession>Q9BRZ8</accession>
<comment type="function">
    <text evidence="2 3">Converts big endothelin-1 to endothelin-1. May also have methyltransferase activity (By similarity). May play a role in amyloid-beta processing (By similarity).</text>
</comment>
<comment type="catalytic activity">
    <reaction evidence="3">
        <text>Hydrolysis of the 21-Trp-|-Val-22 bond in big endothelin to form endothelin 1.</text>
        <dbReference type="EC" id="3.4.24.71"/>
    </reaction>
</comment>
<comment type="cofactor">
    <cofactor evidence="4">
        <name>Zn(2+)</name>
        <dbReference type="ChEBI" id="CHEBI:29105"/>
    </cofactor>
    <text evidence="4">Binds 1 zinc ion per subunit.</text>
</comment>
<comment type="activity regulation">
    <text evidence="3">Inhibited by phosphoramidon.</text>
</comment>
<comment type="subcellular location">
    <subcellularLocation>
        <location evidence="3">Golgi apparatus membrane</location>
        <topology evidence="3">Single-pass membrane protein</topology>
    </subcellularLocation>
    <subcellularLocation>
        <location evidence="3">Cytoplasmic vesicle</location>
        <location evidence="3">Secretory vesicle membrane</location>
    </subcellularLocation>
</comment>
<comment type="alternative products">
    <event type="alternative splicing"/>
    <isoform>
        <id>P0DPD8-1</id>
        <id>O60344-1</id>
        <name>EEF1AKMT4-ECE2-1</name>
        <name evidence="8">ECE-2A</name>
        <sequence type="displayed"/>
    </isoform>
    <isoform>
        <id>P0DPD6-4</id>
        <id>O60344-5</id>
        <name>ECE2-1</name>
        <name>ECE2-2C</name>
        <sequence type="external"/>
    </isoform>
    <isoform>
        <id>P0DPD6-2</id>
        <id>O60344-2</id>
        <name>ECE2-2</name>
        <name>ECE-2B</name>
        <sequence type="external"/>
    </isoform>
    <isoform>
        <id>P0DPD6-3</id>
        <id>O60344-3</id>
        <name>ECE2-3</name>
        <sequence type="external"/>
    </isoform>
    <isoform>
        <id>P0DPD7-4</id>
        <id>O60344-4</id>
        <name>EEF1AKMT4-1</name>
        <sequence type="external"/>
    </isoform>
</comment>
<comment type="miscellaneous">
    <molecule>Isoform EEF1AKMT4-ECE2-1</molecule>
    <text evidence="9">Based on a naturally occurring readthrough transcript which produces an EEF1AKMT4-ECE2 fusion protein.</text>
</comment>
<comment type="similarity">
    <text evidence="9">In the N-terminal section; belongs to the methyltransferase superfamily.</text>
</comment>
<comment type="similarity">
    <text evidence="9">In the C-terminal section; belongs to the peptidase M13 family.</text>
</comment>
<comment type="sequence caution" evidence="9">
    <conflict type="erroneous initiation">
        <sequence resource="EMBL-CDS" id="AAL30386"/>
    </conflict>
    <text>Truncated N-terminus.</text>
</comment>
<evidence type="ECO:0000250" key="1">
    <source>
        <dbReference type="UniProtKB" id="P0DPD7"/>
    </source>
</evidence>
<evidence type="ECO:0000250" key="2">
    <source>
        <dbReference type="UniProtKB" id="P0DPD9"/>
    </source>
</evidence>
<evidence type="ECO:0000250" key="3">
    <source>
        <dbReference type="UniProtKB" id="P0DPE2"/>
    </source>
</evidence>
<evidence type="ECO:0000250" key="4">
    <source>
        <dbReference type="UniProtKB" id="P42892"/>
    </source>
</evidence>
<evidence type="ECO:0000255" key="5"/>
<evidence type="ECO:0000255" key="6">
    <source>
        <dbReference type="PROSITE-ProRule" id="PRU01233"/>
    </source>
</evidence>
<evidence type="ECO:0000255" key="7">
    <source>
        <dbReference type="PROSITE-ProRule" id="PRU10095"/>
    </source>
</evidence>
<evidence type="ECO:0000303" key="8">
    <source>
    </source>
</evidence>
<evidence type="ECO:0000305" key="9"/>
<evidence type="ECO:0000312" key="10">
    <source>
        <dbReference type="HGNC" id="HGNC:53615"/>
    </source>
</evidence>
<evidence type="ECO:0007744" key="11">
    <source>
    </source>
</evidence>
<gene>
    <name evidence="10" type="primary">EEF1AKMT4-ECE2</name>
</gene>
<sequence>MASPGAGRAPPELPERNCGYREVEYWDQRYQGAADSAPYDWFGDFSSFRALLEPELRPEDRILVLGCGNSALSYELFLGGFPNVTSVDYSSVVVAAMQARHAHVPQLRWETMDVRKLDFPSASFDVVLEKGTLDALLAGERDPWTVSSEGVHTVDQVLSEVGFQKGTRQLLGSRTQLELVLAGASLLLAALLLGCLVALGVQYHRDPSHSTCLTEACIRVAGKILESLDRGVSPCEDFYQFSCGGWIRRNPLPDGRSRWNTFNSLWDQNQAILKHLLENTTFNSSSEAEQKTQRFYLSCLQVERIEELGAQPLRDLIEKIGGWNITGPWDQDNFMEVLKAVAGTYRATPFFTVYISADSKSSNSNVIQVDQSGLFLPSRDYYLNRTANEKVLTAYLDYMEELGMLLGGRPTSTREQMQQVLELEIQLANITVPQDQRRDEEKIYHKMSISELQALAPSMDWLEFLSFLLSPLELSDSEPVVVYGMDYLQQVSELINRTEPSILNNYLIWNLVQKTTSSLDRRFESAQEKLLETLYGTKKSCVPRWQTCISNTDDALGFALGSLFVKATFDRQSKEIAEGMISEIRTAFEEALGQLVWMDEKTRQAAKEKADAIYDMIGFPDFILEPKELDDVYDGYEISEDSFFQNMLNLYNFSAKVMADQLRKPPSRDQWSMTPQTVNAYYLPTKNEIVFPAGILQAPFYARNHPKALNFGGIGVVMGHELTHAFDDQGREYDKEGNLRPWWQNESLAAFRNHTACMEEQYNQYQVNGERLNGRQTLGENIADNGGLKAAYNAYKAWLRKHGEEQQLPAVGLTNHQLFFVGFAQVWCSVRTPESSHEGLVTDPHSPARFRVLGTLSNSRDFLRHFGCPVGSPMNPGQLCEVW</sequence>
<name>EFCE2_HUMAN</name>
<organism>
    <name type="scientific">Homo sapiens</name>
    <name type="common">Human</name>
    <dbReference type="NCBI Taxonomy" id="9606"/>
    <lineage>
        <taxon>Eukaryota</taxon>
        <taxon>Metazoa</taxon>
        <taxon>Chordata</taxon>
        <taxon>Craniata</taxon>
        <taxon>Vertebrata</taxon>
        <taxon>Euteleostomi</taxon>
        <taxon>Mammalia</taxon>
        <taxon>Eutheria</taxon>
        <taxon>Euarchontoglires</taxon>
        <taxon>Primates</taxon>
        <taxon>Haplorrhini</taxon>
        <taxon>Catarrhini</taxon>
        <taxon>Hominidae</taxon>
        <taxon>Homo</taxon>
    </lineage>
</organism>
<dbReference type="EC" id="3.4.24.71" evidence="3"/>
<dbReference type="EC" id="2.1.1.-"/>
<dbReference type="EMBL" id="AC061705">
    <property type="status" value="NOT_ANNOTATED_CDS"/>
    <property type="molecule type" value="Genomic_DNA"/>
</dbReference>
<dbReference type="EMBL" id="AC078797">
    <property type="status" value="NOT_ANNOTATED_CDS"/>
    <property type="molecule type" value="Genomic_DNA"/>
</dbReference>
<dbReference type="EMBL" id="AF428263">
    <property type="protein sequence ID" value="AAL30386.1"/>
    <property type="status" value="ALT_INIT"/>
    <property type="molecule type" value="mRNA"/>
</dbReference>
<dbReference type="RefSeq" id="NP_055508.3">
    <molecule id="P0DPD8-1"/>
    <property type="nucleotide sequence ID" value="NM_014693.3"/>
</dbReference>
<dbReference type="SMR" id="P0DPD8"/>
<dbReference type="FunCoup" id="P0DPD8">
    <property type="interactions" value="191"/>
</dbReference>
<dbReference type="STRING" id="9606.ENSP00000384223"/>
<dbReference type="BindingDB" id="P0DPD8"/>
<dbReference type="GlyCosmos" id="P0DPD8">
    <property type="glycosylation" value="9 sites, No reported glycans"/>
</dbReference>
<dbReference type="GlyGen" id="P0DPD8">
    <property type="glycosylation" value="10 sites, 1 O-linked glycan (1 site)"/>
</dbReference>
<dbReference type="iPTMnet" id="P0DPD8"/>
<dbReference type="PhosphoSitePlus" id="P0DPD8"/>
<dbReference type="jPOST" id="P0DPD8"/>
<dbReference type="MassIVE" id="P0DPD8"/>
<dbReference type="PaxDb" id="9606-ENSP00000384223"/>
<dbReference type="Pumba" id="P0DPD8"/>
<dbReference type="Antibodypedia" id="81501">
    <property type="antibodies" value="15 antibodies from 1 providers"/>
</dbReference>
<dbReference type="DNASU" id="9718"/>
<dbReference type="Ensembl" id="ENST00000402825.7">
    <molecule id="P0DPD8-1"/>
    <property type="protein sequence ID" value="ENSP00000384223.3"/>
    <property type="gene ID" value="ENSG00000284917.1"/>
</dbReference>
<dbReference type="GeneID" id="110599583"/>
<dbReference type="KEGG" id="hsa:110599583"/>
<dbReference type="KEGG" id="hsa:9718"/>
<dbReference type="AGR" id="HGNC:13275"/>
<dbReference type="AGR" id="HGNC:53615"/>
<dbReference type="CTD" id="110599583"/>
<dbReference type="CTD" id="9718"/>
<dbReference type="DisGeNET" id="110599583"/>
<dbReference type="DisGeNET" id="9718"/>
<dbReference type="GeneCards" id="EEF1AKMT4-ECE2"/>
<dbReference type="HGNC" id="HGNC:53615">
    <property type="gene designation" value="EEF1AKMT4-ECE2"/>
</dbReference>
<dbReference type="HPA" id="ENSG00000284917">
    <property type="expression patterns" value="Not detected"/>
</dbReference>
<dbReference type="MIM" id="610145">
    <property type="type" value="gene"/>
</dbReference>
<dbReference type="neXtProt" id="NX_P0DPD8"/>
<dbReference type="VEuPathDB" id="HostDB:ENSG00000284917"/>
<dbReference type="InParanoid" id="P0DPD8"/>
<dbReference type="OMA" id="RYCELEY"/>
<dbReference type="OrthoDB" id="6475849at2759"/>
<dbReference type="PAN-GO" id="P0DPD8">
    <property type="GO annotations" value="3 GO annotations based on evolutionary models"/>
</dbReference>
<dbReference type="PathwayCommons" id="P0DPD8"/>
<dbReference type="SignaLink" id="P0DPD8"/>
<dbReference type="ChiTaRS" id="EEF1AKMT4-ECE2">
    <property type="organism name" value="human"/>
</dbReference>
<dbReference type="Pharos" id="P0DPD8">
    <property type="development level" value="Tdark"/>
</dbReference>
<dbReference type="PRO" id="PR:P0DPD8"/>
<dbReference type="Proteomes" id="UP000005640">
    <property type="component" value="Chromosome 3"/>
</dbReference>
<dbReference type="Bgee" id="ENSG00000284917">
    <property type="expression patterns" value="Expressed in prefrontal cortex and 27 other cell types or tissues"/>
</dbReference>
<dbReference type="GO" id="GO:0000139">
    <property type="term" value="C:Golgi membrane"/>
    <property type="evidence" value="ECO:0000250"/>
    <property type="project" value="UniProtKB"/>
</dbReference>
<dbReference type="GO" id="GO:0005886">
    <property type="term" value="C:plasma membrane"/>
    <property type="evidence" value="ECO:0000318"/>
    <property type="project" value="GO_Central"/>
</dbReference>
<dbReference type="GO" id="GO:0030658">
    <property type="term" value="C:transport vesicle membrane"/>
    <property type="evidence" value="ECO:0000250"/>
    <property type="project" value="UniProtKB"/>
</dbReference>
<dbReference type="GO" id="GO:0046872">
    <property type="term" value="F:metal ion binding"/>
    <property type="evidence" value="ECO:0007669"/>
    <property type="project" value="UniProtKB-KW"/>
</dbReference>
<dbReference type="GO" id="GO:0004222">
    <property type="term" value="F:metalloendopeptidase activity"/>
    <property type="evidence" value="ECO:0000318"/>
    <property type="project" value="GO_Central"/>
</dbReference>
<dbReference type="GO" id="GO:0008168">
    <property type="term" value="F:methyltransferase activity"/>
    <property type="evidence" value="ECO:0007669"/>
    <property type="project" value="UniProtKB-KW"/>
</dbReference>
<dbReference type="GO" id="GO:0007420">
    <property type="term" value="P:brain development"/>
    <property type="evidence" value="ECO:0000250"/>
    <property type="project" value="ARUK-UCL"/>
</dbReference>
<dbReference type="GO" id="GO:0010002">
    <property type="term" value="P:cardioblast differentiation"/>
    <property type="evidence" value="ECO:0000250"/>
    <property type="project" value="ARUK-UCL"/>
</dbReference>
<dbReference type="GO" id="GO:0007507">
    <property type="term" value="P:heart development"/>
    <property type="evidence" value="ECO:0000250"/>
    <property type="project" value="ARUK-UCL"/>
</dbReference>
<dbReference type="GO" id="GO:0032259">
    <property type="term" value="P:methylation"/>
    <property type="evidence" value="ECO:0007669"/>
    <property type="project" value="UniProtKB-KW"/>
</dbReference>
<dbReference type="GO" id="GO:0016485">
    <property type="term" value="P:protein processing"/>
    <property type="evidence" value="ECO:0000318"/>
    <property type="project" value="GO_Central"/>
</dbReference>
<dbReference type="CDD" id="cd02440">
    <property type="entry name" value="AdoMet_MTases"/>
    <property type="match status" value="1"/>
</dbReference>
<dbReference type="CDD" id="cd08662">
    <property type="entry name" value="M13"/>
    <property type="match status" value="1"/>
</dbReference>
<dbReference type="FunFam" id="1.10.1380.10:FF:000001">
    <property type="entry name" value="endothelin-converting enzyme 2 isoform X1"/>
    <property type="match status" value="1"/>
</dbReference>
<dbReference type="FunFam" id="3.40.50.150:FF:000308">
    <property type="entry name" value="endothelin-converting enzyme 2 isoform X2"/>
    <property type="match status" value="1"/>
</dbReference>
<dbReference type="Gene3D" id="3.40.390.10">
    <property type="entry name" value="Collagenase (Catalytic Domain)"/>
    <property type="match status" value="1"/>
</dbReference>
<dbReference type="Gene3D" id="1.10.1380.10">
    <property type="entry name" value="Neutral endopeptidase , domain2"/>
    <property type="match status" value="1"/>
</dbReference>
<dbReference type="Gene3D" id="3.40.50.150">
    <property type="entry name" value="Vaccinia Virus protein VP39"/>
    <property type="match status" value="1"/>
</dbReference>
<dbReference type="InterPro" id="IPR024079">
    <property type="entry name" value="MetalloPept_cat_dom_sf"/>
</dbReference>
<dbReference type="InterPro" id="IPR041698">
    <property type="entry name" value="Methyltransf_25"/>
</dbReference>
<dbReference type="InterPro" id="IPR000718">
    <property type="entry name" value="Peptidase_M13"/>
</dbReference>
<dbReference type="InterPro" id="IPR018497">
    <property type="entry name" value="Peptidase_M13_C"/>
</dbReference>
<dbReference type="InterPro" id="IPR042089">
    <property type="entry name" value="Peptidase_M13_dom_2"/>
</dbReference>
<dbReference type="InterPro" id="IPR008753">
    <property type="entry name" value="Peptidase_M13_N"/>
</dbReference>
<dbReference type="InterPro" id="IPR029063">
    <property type="entry name" value="SAM-dependent_MTases_sf"/>
</dbReference>
<dbReference type="PANTHER" id="PTHR11733:SF127">
    <property type="entry name" value="EEF1AKMT4-ECE2 READTHROUGH TRANSCRIPT PROTEIN-RELATED"/>
    <property type="match status" value="1"/>
</dbReference>
<dbReference type="PANTHER" id="PTHR11733">
    <property type="entry name" value="ZINC METALLOPROTEASE FAMILY M13 NEPRILYSIN-RELATED"/>
    <property type="match status" value="1"/>
</dbReference>
<dbReference type="Pfam" id="PF13649">
    <property type="entry name" value="Methyltransf_25"/>
    <property type="match status" value="1"/>
</dbReference>
<dbReference type="Pfam" id="PF01431">
    <property type="entry name" value="Peptidase_M13"/>
    <property type="match status" value="1"/>
</dbReference>
<dbReference type="Pfam" id="PF05649">
    <property type="entry name" value="Peptidase_M13_N"/>
    <property type="match status" value="1"/>
</dbReference>
<dbReference type="PRINTS" id="PR00786">
    <property type="entry name" value="NEPRILYSIN"/>
</dbReference>
<dbReference type="SUPFAM" id="SSF55486">
    <property type="entry name" value="Metalloproteases ('zincins'), catalytic domain"/>
    <property type="match status" value="1"/>
</dbReference>
<dbReference type="SUPFAM" id="SSF53335">
    <property type="entry name" value="S-adenosyl-L-methionine-dependent methyltransferases"/>
    <property type="match status" value="1"/>
</dbReference>
<dbReference type="PROSITE" id="PS51885">
    <property type="entry name" value="NEPRILYSIN"/>
    <property type="match status" value="1"/>
</dbReference>
<dbReference type="PROSITE" id="PS00142">
    <property type="entry name" value="ZINC_PROTEASE"/>
    <property type="match status" value="1"/>
</dbReference>
<keyword id="KW-0025">Alternative splicing</keyword>
<keyword id="KW-0968">Cytoplasmic vesicle</keyword>
<keyword id="KW-1015">Disulfide bond</keyword>
<keyword id="KW-0325">Glycoprotein</keyword>
<keyword id="KW-0333">Golgi apparatus</keyword>
<keyword id="KW-0378">Hydrolase</keyword>
<keyword id="KW-0472">Membrane</keyword>
<keyword id="KW-0479">Metal-binding</keyword>
<keyword id="KW-0482">Metalloprotease</keyword>
<keyword id="KW-0489">Methyltransferase</keyword>
<keyword id="KW-0511">Multifunctional enzyme</keyword>
<keyword id="KW-0597">Phosphoprotein</keyword>
<keyword id="KW-0645">Protease</keyword>
<keyword id="KW-1185">Reference proteome</keyword>
<keyword id="KW-0808">Transferase</keyword>
<keyword id="KW-0812">Transmembrane</keyword>
<keyword id="KW-1133">Transmembrane helix</keyword>
<keyword id="KW-0862">Zinc</keyword>
<proteinExistence type="evidence at protein level"/>
<reference key="1">
    <citation type="journal article" date="2006" name="Nature">
        <title>The DNA sequence, annotation and analysis of human chromosome 3.</title>
        <authorList>
            <person name="Muzny D.M."/>
            <person name="Scherer S.E."/>
            <person name="Kaul R."/>
            <person name="Wang J."/>
            <person name="Yu J."/>
            <person name="Sudbrak R."/>
            <person name="Buhay C.J."/>
            <person name="Chen R."/>
            <person name="Cree A."/>
            <person name="Ding Y."/>
            <person name="Dugan-Rocha S."/>
            <person name="Gill R."/>
            <person name="Gunaratne P."/>
            <person name="Harris R.A."/>
            <person name="Hawes A.C."/>
            <person name="Hernandez J."/>
            <person name="Hodgson A.V."/>
            <person name="Hume J."/>
            <person name="Jackson A."/>
            <person name="Khan Z.M."/>
            <person name="Kovar-Smith C."/>
            <person name="Lewis L.R."/>
            <person name="Lozado R.J."/>
            <person name="Metzker M.L."/>
            <person name="Milosavljevic A."/>
            <person name="Miner G.R."/>
            <person name="Morgan M.B."/>
            <person name="Nazareth L.V."/>
            <person name="Scott G."/>
            <person name="Sodergren E."/>
            <person name="Song X.-Z."/>
            <person name="Steffen D."/>
            <person name="Wei S."/>
            <person name="Wheeler D.A."/>
            <person name="Wright M.W."/>
            <person name="Worley K.C."/>
            <person name="Yuan Y."/>
            <person name="Zhang Z."/>
            <person name="Adams C.Q."/>
            <person name="Ansari-Lari M.A."/>
            <person name="Ayele M."/>
            <person name="Brown M.J."/>
            <person name="Chen G."/>
            <person name="Chen Z."/>
            <person name="Clendenning J."/>
            <person name="Clerc-Blankenburg K.P."/>
            <person name="Chen R."/>
            <person name="Chen Z."/>
            <person name="Davis C."/>
            <person name="Delgado O."/>
            <person name="Dinh H.H."/>
            <person name="Dong W."/>
            <person name="Draper H."/>
            <person name="Ernst S."/>
            <person name="Fu G."/>
            <person name="Gonzalez-Garay M.L."/>
            <person name="Garcia D.K."/>
            <person name="Gillett W."/>
            <person name="Gu J."/>
            <person name="Hao B."/>
            <person name="Haugen E."/>
            <person name="Havlak P."/>
            <person name="He X."/>
            <person name="Hennig S."/>
            <person name="Hu S."/>
            <person name="Huang W."/>
            <person name="Jackson L.R."/>
            <person name="Jacob L.S."/>
            <person name="Kelly S.H."/>
            <person name="Kube M."/>
            <person name="Levy R."/>
            <person name="Li Z."/>
            <person name="Liu B."/>
            <person name="Liu J."/>
            <person name="Liu W."/>
            <person name="Lu J."/>
            <person name="Maheshwari M."/>
            <person name="Nguyen B.-V."/>
            <person name="Okwuonu G.O."/>
            <person name="Palmeiri A."/>
            <person name="Pasternak S."/>
            <person name="Perez L.M."/>
            <person name="Phelps K.A."/>
            <person name="Plopper F.J."/>
            <person name="Qiang B."/>
            <person name="Raymond C."/>
            <person name="Rodriguez R."/>
            <person name="Saenphimmachak C."/>
            <person name="Santibanez J."/>
            <person name="Shen H."/>
            <person name="Shen Y."/>
            <person name="Subramanian S."/>
            <person name="Tabor P.E."/>
            <person name="Verduzco D."/>
            <person name="Waldron L."/>
            <person name="Wang J."/>
            <person name="Wang J."/>
            <person name="Wang Q."/>
            <person name="Williams G.A."/>
            <person name="Wong G.K.-S."/>
            <person name="Yao Z."/>
            <person name="Zhang J."/>
            <person name="Zhang X."/>
            <person name="Zhao G."/>
            <person name="Zhou J."/>
            <person name="Zhou Y."/>
            <person name="Nelson D."/>
            <person name="Lehrach H."/>
            <person name="Reinhardt R."/>
            <person name="Naylor S.L."/>
            <person name="Yang H."/>
            <person name="Olson M."/>
            <person name="Weinstock G."/>
            <person name="Gibbs R.A."/>
        </authorList>
    </citation>
    <scope>NUCLEOTIDE SEQUENCE [LARGE SCALE GENOMIC DNA]</scope>
</reference>
<reference key="2">
    <citation type="journal article" date="2001" name="Biochim. Biophys. Acta">
        <title>Human endothelin converting enzyme-2 (ECE2): characterization of mRNA species and chromosomal localization.</title>
        <authorList>
            <person name="Lorenzo M.-N."/>
            <person name="Khan R.Y."/>
            <person name="Wang Y."/>
            <person name="Tai S.C."/>
            <person name="Chan G.C."/>
            <person name="Cheung A.H."/>
            <person name="Marsden P.A."/>
        </authorList>
    </citation>
    <scope>NUCLEOTIDE SEQUENCE [MRNA] OF 13-883 (ISOFORM EEF1AKMT4-ECE2-1)</scope>
    <scope>ALTERNATIVE SPLICING</scope>
</reference>
<reference key="3">
    <citation type="journal article" date="2005" name="Nat. Biotechnol.">
        <title>Immunoaffinity profiling of tyrosine phosphorylation in cancer cells.</title>
        <authorList>
            <person name="Rush J."/>
            <person name="Moritz A."/>
            <person name="Lee K.A."/>
            <person name="Guo A."/>
            <person name="Goss V.L."/>
            <person name="Spek E.J."/>
            <person name="Zhang H."/>
            <person name="Zha X.-M."/>
            <person name="Polakiewicz R.D."/>
            <person name="Comb M.J."/>
        </authorList>
    </citation>
    <scope>PHOSPHORYLATION [LARGE SCALE ANALYSIS] AT TYR-39</scope>
    <scope>IDENTIFICATION BY MASS SPECTROMETRY [LARGE SCALE ANALYSIS]</scope>
</reference>
<protein>
    <recommendedName>
        <fullName evidence="9">EEF1AKMT4-ECE2 readthrough transcript protein</fullName>
        <ecNumber evidence="3">3.4.24.71</ecNumber>
    </recommendedName>
    <domain>
        <recommendedName>
            <fullName evidence="9">Methyltransferase-like region</fullName>
            <ecNumber>2.1.1.-</ecNumber>
        </recommendedName>
    </domain>
    <domain>
        <recommendedName>
            <fullName evidence="9">Endothelin-converting enzyme 2 region</fullName>
            <ecNumber>3.4.24.71</ecNumber>
        </recommendedName>
    </domain>
</protein>
<feature type="chain" id="PRO_0000078223" description="EEF1AKMT4-ECE2 readthrough transcript protein">
    <location>
        <begin position="1"/>
        <end position="883"/>
    </location>
</feature>
<feature type="topological domain" description="Cytoplasmic" evidence="9">
    <location>
        <begin position="1"/>
        <end position="178"/>
    </location>
</feature>
<feature type="transmembrane region" description="Helical" evidence="5">
    <location>
        <begin position="179"/>
        <end position="199"/>
    </location>
</feature>
<feature type="topological domain" description="Lumenal" evidence="9">
    <location>
        <begin position="200"/>
        <end position="883"/>
    </location>
</feature>
<feature type="domain" description="Peptidase M13" evidence="6">
    <location>
        <begin position="211"/>
        <end position="883"/>
    </location>
</feature>
<feature type="region of interest" description="Methyltransferase-like region" evidence="9">
    <location>
        <begin position="1"/>
        <end position="160"/>
    </location>
</feature>
<feature type="active site" evidence="6 7">
    <location>
        <position position="721"/>
    </location>
</feature>
<feature type="active site" description="Proton donor" evidence="6">
    <location>
        <position position="784"/>
    </location>
</feature>
<feature type="binding site" evidence="1">
    <location>
        <position position="26"/>
    </location>
    <ligand>
        <name>S-adenosyl-L-methionine</name>
        <dbReference type="ChEBI" id="CHEBI:59789"/>
    </ligand>
</feature>
<feature type="binding site" evidence="1">
    <location>
        <position position="30"/>
    </location>
    <ligand>
        <name>S-adenosyl-L-methionine</name>
        <dbReference type="ChEBI" id="CHEBI:59789"/>
    </ligand>
</feature>
<feature type="binding site" evidence="1">
    <location>
        <position position="41"/>
    </location>
    <ligand>
        <name>S-adenosyl-L-methionine</name>
        <dbReference type="ChEBI" id="CHEBI:59789"/>
    </ligand>
</feature>
<feature type="binding site" evidence="1">
    <location>
        <position position="66"/>
    </location>
    <ligand>
        <name>S-adenosyl-L-methionine</name>
        <dbReference type="ChEBI" id="CHEBI:59789"/>
    </ligand>
</feature>
<feature type="binding site" evidence="1">
    <location>
        <begin position="88"/>
        <end position="89"/>
    </location>
    <ligand>
        <name>S-adenosyl-L-methionine</name>
        <dbReference type="ChEBI" id="CHEBI:59789"/>
    </ligand>
</feature>
<feature type="binding site" evidence="1">
    <location>
        <begin position="113"/>
        <end position="114"/>
    </location>
    <ligand>
        <name>S-adenosyl-L-methionine</name>
        <dbReference type="ChEBI" id="CHEBI:59789"/>
    </ligand>
</feature>
<feature type="binding site" evidence="1">
    <location>
        <position position="130"/>
    </location>
    <ligand>
        <name>S-adenosyl-L-methionine</name>
        <dbReference type="ChEBI" id="CHEBI:59789"/>
    </ligand>
</feature>
<feature type="binding site" evidence="6 7">
    <location>
        <position position="720"/>
    </location>
    <ligand>
        <name>Zn(2+)</name>
        <dbReference type="ChEBI" id="CHEBI:29105"/>
        <note>catalytic</note>
    </ligand>
</feature>
<feature type="binding site" evidence="6 7">
    <location>
        <position position="724"/>
    </location>
    <ligand>
        <name>Zn(2+)</name>
        <dbReference type="ChEBI" id="CHEBI:29105"/>
        <note>catalytic</note>
    </ligand>
</feature>
<feature type="binding site" evidence="6">
    <location>
        <position position="780"/>
    </location>
    <ligand>
        <name>Zn(2+)</name>
        <dbReference type="ChEBI" id="CHEBI:29105"/>
        <note>catalytic</note>
    </ligand>
</feature>
<feature type="modified residue" description="Phosphotyrosine" evidence="11">
    <location>
        <position position="39"/>
    </location>
</feature>
<feature type="glycosylation site" description="N-linked (GlcNAc...) asparagine" evidence="5">
    <location>
        <position position="279"/>
    </location>
</feature>
<feature type="glycosylation site" description="N-linked (GlcNAc...) asparagine" evidence="5">
    <location>
        <position position="283"/>
    </location>
</feature>
<feature type="glycosylation site" description="N-linked (GlcNAc...) asparagine" evidence="5">
    <location>
        <position position="324"/>
    </location>
</feature>
<feature type="glycosylation site" description="N-linked (GlcNAc...) asparagine" evidence="5">
    <location>
        <position position="384"/>
    </location>
</feature>
<feature type="glycosylation site" description="N-linked (GlcNAc...) asparagine" evidence="5">
    <location>
        <position position="429"/>
    </location>
</feature>
<feature type="glycosylation site" description="N-linked (GlcNAc...) asparagine" evidence="5">
    <location>
        <position position="496"/>
    </location>
</feature>
<feature type="glycosylation site" description="N-linked (GlcNAc...) asparagine" evidence="5">
    <location>
        <position position="652"/>
    </location>
</feature>
<feature type="glycosylation site" description="N-linked (GlcNAc...) asparagine" evidence="5">
    <location>
        <position position="745"/>
    </location>
</feature>
<feature type="glycosylation site" description="N-linked (GlcNAc...) asparagine" evidence="5">
    <location>
        <position position="753"/>
    </location>
</feature>
<feature type="disulfide bond" evidence="6">
    <location>
        <begin position="212"/>
        <end position="217"/>
    </location>
</feature>
<feature type="disulfide bond" evidence="6">
    <location>
        <begin position="235"/>
        <end position="868"/>
    </location>
</feature>
<feature type="disulfide bond" evidence="6">
    <location>
        <begin position="243"/>
        <end position="828"/>
    </location>
</feature>
<feature type="disulfide bond" evidence="6">
    <location>
        <begin position="299"/>
        <end position="548"/>
    </location>
</feature>
<feature type="disulfide bond" evidence="6">
    <location>
        <begin position="757"/>
        <end position="880"/>
    </location>
</feature>